<protein>
    <recommendedName>
        <fullName evidence="1">GMP synthase [glutamine-hydrolyzing]</fullName>
        <ecNumber evidence="1">6.3.5.2</ecNumber>
    </recommendedName>
    <alternativeName>
        <fullName evidence="1">GMP synthetase</fullName>
    </alternativeName>
    <alternativeName>
        <fullName evidence="1">Glutamine amidotransferase</fullName>
    </alternativeName>
</protein>
<sequence>MTKNIHDQRILILDFGSQYTQLVARRVREIGVYCELWSWDVEEADIREFNPDGIILSGGPESVTEDNSPRAPQYVFDSGVPVLGVCYGMQTMAEQLGGKVSTSDEREFGYAAVKVSGESAIFKDLEATQDVWMSHGDKVVEIPAGFTKVGETDTCPYAAMANEEKKYYGVQFHPEVTHTKNGLQMLENFVLGICGCERLWTSESIIEDAVARIKEQVGDDEVILGLSGGVDSSVVAMLVHRAIGDKLTCVFVDNGLLRLNEGQQVMDMFGDKFGLNIIKVDAEERFLKALEGKSDPEEKRKTIGHVFVDVFDEESKKLKNAKWLAQGTIYPDVIESAASKTGKAHVIKSHHNVGGLPDDMEMGLVEPLRELFKDEVRKIGLELGLPYEMLYRHPFPGPGLGVRVLGEIKKEYCDLLRRADAIFIEELHAADLYNKVSQAFTVFLPVRSVGVMGDGRKYDWVVSLRAVETIDFMTAHWAHLPYDFLGKVSNRIINEVNGISRVVYDISGKPPATIEWE</sequence>
<gene>
    <name evidence="1" type="primary">guaA</name>
    <name type="ordered locus">VV1_0418</name>
</gene>
<proteinExistence type="inferred from homology"/>
<evidence type="ECO:0000255" key="1">
    <source>
        <dbReference type="HAMAP-Rule" id="MF_00344"/>
    </source>
</evidence>
<keyword id="KW-0067">ATP-binding</keyword>
<keyword id="KW-0315">Glutamine amidotransferase</keyword>
<keyword id="KW-0332">GMP biosynthesis</keyword>
<keyword id="KW-0436">Ligase</keyword>
<keyword id="KW-0547">Nucleotide-binding</keyword>
<keyword id="KW-0658">Purine biosynthesis</keyword>
<organism>
    <name type="scientific">Vibrio vulnificus (strain CMCP6)</name>
    <dbReference type="NCBI Taxonomy" id="216895"/>
    <lineage>
        <taxon>Bacteria</taxon>
        <taxon>Pseudomonadati</taxon>
        <taxon>Pseudomonadota</taxon>
        <taxon>Gammaproteobacteria</taxon>
        <taxon>Vibrionales</taxon>
        <taxon>Vibrionaceae</taxon>
        <taxon>Vibrio</taxon>
    </lineage>
</organism>
<name>GUAA_VIBVU</name>
<accession>Q8DF07</accession>
<comment type="function">
    <text evidence="1">Catalyzes the synthesis of GMP from XMP.</text>
</comment>
<comment type="catalytic activity">
    <reaction evidence="1">
        <text>XMP + L-glutamine + ATP + H2O = GMP + L-glutamate + AMP + diphosphate + 2 H(+)</text>
        <dbReference type="Rhea" id="RHEA:11680"/>
        <dbReference type="ChEBI" id="CHEBI:15377"/>
        <dbReference type="ChEBI" id="CHEBI:15378"/>
        <dbReference type="ChEBI" id="CHEBI:29985"/>
        <dbReference type="ChEBI" id="CHEBI:30616"/>
        <dbReference type="ChEBI" id="CHEBI:33019"/>
        <dbReference type="ChEBI" id="CHEBI:57464"/>
        <dbReference type="ChEBI" id="CHEBI:58115"/>
        <dbReference type="ChEBI" id="CHEBI:58359"/>
        <dbReference type="ChEBI" id="CHEBI:456215"/>
        <dbReference type="EC" id="6.3.5.2"/>
    </reaction>
</comment>
<comment type="pathway">
    <text evidence="1">Purine metabolism; GMP biosynthesis; GMP from XMP (L-Gln route): step 1/1.</text>
</comment>
<comment type="subunit">
    <text evidence="1">Homodimer.</text>
</comment>
<reference key="1">
    <citation type="submission" date="2002-12" db="EMBL/GenBank/DDBJ databases">
        <title>Complete genome sequence of Vibrio vulnificus CMCP6.</title>
        <authorList>
            <person name="Rhee J.H."/>
            <person name="Kim S.Y."/>
            <person name="Chung S.S."/>
            <person name="Kim J.J."/>
            <person name="Moon Y.H."/>
            <person name="Jeong H."/>
            <person name="Choy H.E."/>
        </authorList>
    </citation>
    <scope>NUCLEOTIDE SEQUENCE [LARGE SCALE GENOMIC DNA]</scope>
    <source>
        <strain>CMCP6</strain>
    </source>
</reference>
<feature type="chain" id="PRO_0000140205" description="GMP synthase [glutamine-hydrolyzing]">
    <location>
        <begin position="1"/>
        <end position="517"/>
    </location>
</feature>
<feature type="domain" description="Glutamine amidotransferase type-1" evidence="1">
    <location>
        <begin position="9"/>
        <end position="199"/>
    </location>
</feature>
<feature type="domain" description="GMPS ATP-PPase" evidence="1">
    <location>
        <begin position="200"/>
        <end position="392"/>
    </location>
</feature>
<feature type="active site" description="Nucleophile" evidence="1">
    <location>
        <position position="86"/>
    </location>
</feature>
<feature type="active site" evidence="1">
    <location>
        <position position="173"/>
    </location>
</feature>
<feature type="active site" evidence="1">
    <location>
        <position position="175"/>
    </location>
</feature>
<feature type="binding site" evidence="1">
    <location>
        <begin position="227"/>
        <end position="233"/>
    </location>
    <ligand>
        <name>ATP</name>
        <dbReference type="ChEBI" id="CHEBI:30616"/>
    </ligand>
</feature>
<dbReference type="EC" id="6.3.5.2" evidence="1"/>
<dbReference type="EMBL" id="AE016795">
    <property type="protein sequence ID" value="AAO08941.1"/>
    <property type="molecule type" value="Genomic_DNA"/>
</dbReference>
<dbReference type="RefSeq" id="WP_011078516.1">
    <property type="nucleotide sequence ID" value="NC_004459.3"/>
</dbReference>
<dbReference type="SMR" id="Q8DF07"/>
<dbReference type="KEGG" id="vvu:VV1_0418"/>
<dbReference type="HOGENOM" id="CLU_014340_0_5_6"/>
<dbReference type="UniPathway" id="UPA00189">
    <property type="reaction ID" value="UER00296"/>
</dbReference>
<dbReference type="Proteomes" id="UP000002275">
    <property type="component" value="Chromosome 1"/>
</dbReference>
<dbReference type="GO" id="GO:0005829">
    <property type="term" value="C:cytosol"/>
    <property type="evidence" value="ECO:0007669"/>
    <property type="project" value="TreeGrafter"/>
</dbReference>
<dbReference type="GO" id="GO:0005524">
    <property type="term" value="F:ATP binding"/>
    <property type="evidence" value="ECO:0007669"/>
    <property type="project" value="UniProtKB-UniRule"/>
</dbReference>
<dbReference type="GO" id="GO:0003921">
    <property type="term" value="F:GMP synthase activity"/>
    <property type="evidence" value="ECO:0007669"/>
    <property type="project" value="InterPro"/>
</dbReference>
<dbReference type="CDD" id="cd01742">
    <property type="entry name" value="GATase1_GMP_Synthase"/>
    <property type="match status" value="1"/>
</dbReference>
<dbReference type="CDD" id="cd01997">
    <property type="entry name" value="GMP_synthase_C"/>
    <property type="match status" value="1"/>
</dbReference>
<dbReference type="FunFam" id="3.30.300.10:FF:000002">
    <property type="entry name" value="GMP synthase [glutamine-hydrolyzing]"/>
    <property type="match status" value="1"/>
</dbReference>
<dbReference type="FunFam" id="3.40.50.620:FF:000001">
    <property type="entry name" value="GMP synthase [glutamine-hydrolyzing]"/>
    <property type="match status" value="1"/>
</dbReference>
<dbReference type="FunFam" id="3.40.50.880:FF:000001">
    <property type="entry name" value="GMP synthase [glutamine-hydrolyzing]"/>
    <property type="match status" value="1"/>
</dbReference>
<dbReference type="Gene3D" id="3.30.300.10">
    <property type="match status" value="1"/>
</dbReference>
<dbReference type="Gene3D" id="3.40.50.880">
    <property type="match status" value="1"/>
</dbReference>
<dbReference type="Gene3D" id="3.40.50.620">
    <property type="entry name" value="HUPs"/>
    <property type="match status" value="1"/>
</dbReference>
<dbReference type="HAMAP" id="MF_00344">
    <property type="entry name" value="GMP_synthase"/>
    <property type="match status" value="1"/>
</dbReference>
<dbReference type="InterPro" id="IPR029062">
    <property type="entry name" value="Class_I_gatase-like"/>
</dbReference>
<dbReference type="InterPro" id="IPR017926">
    <property type="entry name" value="GATASE"/>
</dbReference>
<dbReference type="InterPro" id="IPR001674">
    <property type="entry name" value="GMP_synth_C"/>
</dbReference>
<dbReference type="InterPro" id="IPR004739">
    <property type="entry name" value="GMP_synth_GATase"/>
</dbReference>
<dbReference type="InterPro" id="IPR022955">
    <property type="entry name" value="GMP_synthase"/>
</dbReference>
<dbReference type="InterPro" id="IPR025777">
    <property type="entry name" value="GMPS_ATP_PPase_dom"/>
</dbReference>
<dbReference type="InterPro" id="IPR022310">
    <property type="entry name" value="NAD/GMP_synthase"/>
</dbReference>
<dbReference type="InterPro" id="IPR014729">
    <property type="entry name" value="Rossmann-like_a/b/a_fold"/>
</dbReference>
<dbReference type="NCBIfam" id="TIGR00884">
    <property type="entry name" value="guaA_Cterm"/>
    <property type="match status" value="1"/>
</dbReference>
<dbReference type="NCBIfam" id="TIGR00888">
    <property type="entry name" value="guaA_Nterm"/>
    <property type="match status" value="1"/>
</dbReference>
<dbReference type="NCBIfam" id="NF000848">
    <property type="entry name" value="PRK00074.1"/>
    <property type="match status" value="1"/>
</dbReference>
<dbReference type="PANTHER" id="PTHR11922:SF2">
    <property type="entry name" value="GMP SYNTHASE [GLUTAMINE-HYDROLYZING]"/>
    <property type="match status" value="1"/>
</dbReference>
<dbReference type="PANTHER" id="PTHR11922">
    <property type="entry name" value="GMP SYNTHASE-RELATED"/>
    <property type="match status" value="1"/>
</dbReference>
<dbReference type="Pfam" id="PF00117">
    <property type="entry name" value="GATase"/>
    <property type="match status" value="1"/>
</dbReference>
<dbReference type="Pfam" id="PF00958">
    <property type="entry name" value="GMP_synt_C"/>
    <property type="match status" value="1"/>
</dbReference>
<dbReference type="Pfam" id="PF02540">
    <property type="entry name" value="NAD_synthase"/>
    <property type="match status" value="1"/>
</dbReference>
<dbReference type="PRINTS" id="PR00097">
    <property type="entry name" value="ANTSNTHASEII"/>
</dbReference>
<dbReference type="PRINTS" id="PR00099">
    <property type="entry name" value="CPSGATASE"/>
</dbReference>
<dbReference type="PRINTS" id="PR00096">
    <property type="entry name" value="GATASE"/>
</dbReference>
<dbReference type="SUPFAM" id="SSF52402">
    <property type="entry name" value="Adenine nucleotide alpha hydrolases-like"/>
    <property type="match status" value="1"/>
</dbReference>
<dbReference type="SUPFAM" id="SSF52317">
    <property type="entry name" value="Class I glutamine amidotransferase-like"/>
    <property type="match status" value="1"/>
</dbReference>
<dbReference type="SUPFAM" id="SSF54810">
    <property type="entry name" value="GMP synthetase C-terminal dimerisation domain"/>
    <property type="match status" value="1"/>
</dbReference>
<dbReference type="PROSITE" id="PS51273">
    <property type="entry name" value="GATASE_TYPE_1"/>
    <property type="match status" value="1"/>
</dbReference>
<dbReference type="PROSITE" id="PS51553">
    <property type="entry name" value="GMPS_ATP_PPASE"/>
    <property type="match status" value="1"/>
</dbReference>